<proteinExistence type="inferred from homology"/>
<feature type="chain" id="PRO_1000020185" description="Methionyl-tRNA formyltransferase">
    <location>
        <begin position="1"/>
        <end position="312"/>
    </location>
</feature>
<feature type="binding site" evidence="1">
    <location>
        <begin position="110"/>
        <end position="113"/>
    </location>
    <ligand>
        <name>(6S)-5,6,7,8-tetrahydrofolate</name>
        <dbReference type="ChEBI" id="CHEBI:57453"/>
    </ligand>
</feature>
<keyword id="KW-0648">Protein biosynthesis</keyword>
<keyword id="KW-0808">Transferase</keyword>
<name>FMT_STRSY</name>
<organism>
    <name type="scientific">Streptococcus suis (strain 05ZYH33)</name>
    <dbReference type="NCBI Taxonomy" id="391295"/>
    <lineage>
        <taxon>Bacteria</taxon>
        <taxon>Bacillati</taxon>
        <taxon>Bacillota</taxon>
        <taxon>Bacilli</taxon>
        <taxon>Lactobacillales</taxon>
        <taxon>Streptococcaceae</taxon>
        <taxon>Streptococcus</taxon>
    </lineage>
</organism>
<sequence>MTKLIFMGTPAFSATVLRGLLADGNYNILAVVTQPDRAVGRKKVIQMTPVKEVALEYNLPVYQPEKLSGSQEMDELMNLGADGIVTAAFGQFLPTKLLNSVDFAVNVHASLLPKYRGGAPIHYALINGDERAGVTIMEMVKEMDAGDMISSDSIAIEESDNVGTLFEKLAVVGRDLLLQTLPAYIAGDLKPVAQNPEQVTFSPNIQPEEEVLDWNKTARQLFNQIRGMYPWPVAHTYWQGERFKIQEAVEAEGEGSVGRVIARSKKELIIATGQGALSLKTVQPAGKPKMTIADFLNGAGRDIAVGDQFGDQ</sequence>
<protein>
    <recommendedName>
        <fullName evidence="1">Methionyl-tRNA formyltransferase</fullName>
        <ecNumber evidence="1">2.1.2.9</ecNumber>
    </recommendedName>
</protein>
<reference key="1">
    <citation type="journal article" date="2007" name="PLoS ONE">
        <title>A glimpse of streptococcal toxic shock syndrome from comparative genomics of S. suis 2 Chinese isolates.</title>
        <authorList>
            <person name="Chen C."/>
            <person name="Tang J."/>
            <person name="Dong W."/>
            <person name="Wang C."/>
            <person name="Feng Y."/>
            <person name="Wang J."/>
            <person name="Zheng F."/>
            <person name="Pan X."/>
            <person name="Liu D."/>
            <person name="Li M."/>
            <person name="Song Y."/>
            <person name="Zhu X."/>
            <person name="Sun H."/>
            <person name="Feng T."/>
            <person name="Guo Z."/>
            <person name="Ju A."/>
            <person name="Ge J."/>
            <person name="Dong Y."/>
            <person name="Sun W."/>
            <person name="Jiang Y."/>
            <person name="Wang J."/>
            <person name="Yan J."/>
            <person name="Yang H."/>
            <person name="Wang X."/>
            <person name="Gao G.F."/>
            <person name="Yang R."/>
            <person name="Wang J."/>
            <person name="Yu J."/>
        </authorList>
    </citation>
    <scope>NUCLEOTIDE SEQUENCE [LARGE SCALE GENOMIC DNA]</scope>
    <source>
        <strain>05ZYH33</strain>
    </source>
</reference>
<accession>A4VTF3</accession>
<gene>
    <name evidence="1" type="primary">fmt</name>
    <name type="ordered locus">SSU05_0425</name>
</gene>
<comment type="function">
    <text evidence="1">Attaches a formyl group to the free amino group of methionyl-tRNA(fMet). The formyl group appears to play a dual role in the initiator identity of N-formylmethionyl-tRNA by promoting its recognition by IF2 and preventing the misappropriation of this tRNA by the elongation apparatus.</text>
</comment>
<comment type="catalytic activity">
    <reaction evidence="1">
        <text>L-methionyl-tRNA(fMet) + (6R)-10-formyltetrahydrofolate = N-formyl-L-methionyl-tRNA(fMet) + (6S)-5,6,7,8-tetrahydrofolate + H(+)</text>
        <dbReference type="Rhea" id="RHEA:24380"/>
        <dbReference type="Rhea" id="RHEA-COMP:9952"/>
        <dbReference type="Rhea" id="RHEA-COMP:9953"/>
        <dbReference type="ChEBI" id="CHEBI:15378"/>
        <dbReference type="ChEBI" id="CHEBI:57453"/>
        <dbReference type="ChEBI" id="CHEBI:78530"/>
        <dbReference type="ChEBI" id="CHEBI:78844"/>
        <dbReference type="ChEBI" id="CHEBI:195366"/>
        <dbReference type="EC" id="2.1.2.9"/>
    </reaction>
</comment>
<comment type="similarity">
    <text evidence="1">Belongs to the Fmt family.</text>
</comment>
<dbReference type="EC" id="2.1.2.9" evidence="1"/>
<dbReference type="EMBL" id="CP000407">
    <property type="protein sequence ID" value="ABP89392.1"/>
    <property type="molecule type" value="Genomic_DNA"/>
</dbReference>
<dbReference type="SMR" id="A4VTF3"/>
<dbReference type="STRING" id="391295.SSU05_0425"/>
<dbReference type="KEGG" id="ssu:SSU05_0425"/>
<dbReference type="eggNOG" id="COG0223">
    <property type="taxonomic scope" value="Bacteria"/>
</dbReference>
<dbReference type="HOGENOM" id="CLU_033347_1_1_9"/>
<dbReference type="GO" id="GO:0005829">
    <property type="term" value="C:cytosol"/>
    <property type="evidence" value="ECO:0007669"/>
    <property type="project" value="TreeGrafter"/>
</dbReference>
<dbReference type="GO" id="GO:0004479">
    <property type="term" value="F:methionyl-tRNA formyltransferase activity"/>
    <property type="evidence" value="ECO:0007669"/>
    <property type="project" value="UniProtKB-UniRule"/>
</dbReference>
<dbReference type="CDD" id="cd08646">
    <property type="entry name" value="FMT_core_Met-tRNA-FMT_N"/>
    <property type="match status" value="1"/>
</dbReference>
<dbReference type="CDD" id="cd08704">
    <property type="entry name" value="Met_tRNA_FMT_C"/>
    <property type="match status" value="1"/>
</dbReference>
<dbReference type="FunFam" id="3.40.50.170:FF:000004">
    <property type="entry name" value="Methionyl-tRNA formyltransferase"/>
    <property type="match status" value="1"/>
</dbReference>
<dbReference type="Gene3D" id="3.10.25.10">
    <property type="entry name" value="Formyl transferase, C-terminal domain"/>
    <property type="match status" value="1"/>
</dbReference>
<dbReference type="Gene3D" id="3.40.50.170">
    <property type="entry name" value="Formyl transferase, N-terminal domain"/>
    <property type="match status" value="1"/>
</dbReference>
<dbReference type="HAMAP" id="MF_00182">
    <property type="entry name" value="Formyl_trans"/>
    <property type="match status" value="1"/>
</dbReference>
<dbReference type="InterPro" id="IPR005794">
    <property type="entry name" value="Fmt"/>
</dbReference>
<dbReference type="InterPro" id="IPR005793">
    <property type="entry name" value="Formyl_trans_C"/>
</dbReference>
<dbReference type="InterPro" id="IPR037022">
    <property type="entry name" value="Formyl_trans_C_sf"/>
</dbReference>
<dbReference type="InterPro" id="IPR002376">
    <property type="entry name" value="Formyl_transf_N"/>
</dbReference>
<dbReference type="InterPro" id="IPR036477">
    <property type="entry name" value="Formyl_transf_N_sf"/>
</dbReference>
<dbReference type="InterPro" id="IPR011034">
    <property type="entry name" value="Formyl_transferase-like_C_sf"/>
</dbReference>
<dbReference type="InterPro" id="IPR001555">
    <property type="entry name" value="GART_AS"/>
</dbReference>
<dbReference type="InterPro" id="IPR044135">
    <property type="entry name" value="Met-tRNA-FMT_C"/>
</dbReference>
<dbReference type="InterPro" id="IPR041711">
    <property type="entry name" value="Met-tRNA-FMT_N"/>
</dbReference>
<dbReference type="NCBIfam" id="TIGR00460">
    <property type="entry name" value="fmt"/>
    <property type="match status" value="1"/>
</dbReference>
<dbReference type="PANTHER" id="PTHR11138">
    <property type="entry name" value="METHIONYL-TRNA FORMYLTRANSFERASE"/>
    <property type="match status" value="1"/>
</dbReference>
<dbReference type="PANTHER" id="PTHR11138:SF5">
    <property type="entry name" value="METHIONYL-TRNA FORMYLTRANSFERASE, MITOCHONDRIAL"/>
    <property type="match status" value="1"/>
</dbReference>
<dbReference type="Pfam" id="PF02911">
    <property type="entry name" value="Formyl_trans_C"/>
    <property type="match status" value="1"/>
</dbReference>
<dbReference type="Pfam" id="PF00551">
    <property type="entry name" value="Formyl_trans_N"/>
    <property type="match status" value="1"/>
</dbReference>
<dbReference type="SUPFAM" id="SSF50486">
    <property type="entry name" value="FMT C-terminal domain-like"/>
    <property type="match status" value="1"/>
</dbReference>
<dbReference type="SUPFAM" id="SSF53328">
    <property type="entry name" value="Formyltransferase"/>
    <property type="match status" value="1"/>
</dbReference>
<dbReference type="PROSITE" id="PS00373">
    <property type="entry name" value="GART"/>
    <property type="match status" value="1"/>
</dbReference>
<evidence type="ECO:0000255" key="1">
    <source>
        <dbReference type="HAMAP-Rule" id="MF_00182"/>
    </source>
</evidence>